<name>BLAC_PHOVU</name>
<accession>P30899</accession>
<keyword id="KW-0046">Antibiotic resistance</keyword>
<keyword id="KW-0378">Hydrolase</keyword>
<keyword id="KW-0732">Signal</keyword>
<reference key="1">
    <citation type="journal article" date="1993" name="Antimicrob. Agents Chemother.">
        <title>Genetic and biochemical analysis of a novel Ambler class A beta-lactamase responsible for cefoxitin resistance in Bacteroides species.</title>
        <authorList>
            <person name="Parker A.C."/>
            <person name="Smith C.J."/>
        </authorList>
    </citation>
    <scope>NUCLEOTIDE SEQUENCE [GENOMIC DNA]</scope>
    <source>
        <strain>CLA341</strain>
    </source>
</reference>
<reference key="2">
    <citation type="journal article" date="1991" name="Biochem. J.">
        <title>A standard numbering scheme for the class A beta-lactamases.</title>
        <authorList>
            <person name="Ambler R.P."/>
            <person name="Coulson A.F."/>
            <person name="Frere J.M."/>
            <person name="Ghuysen J.M."/>
            <person name="Joris B."/>
            <person name="Forsman M."/>
            <person name="Levesque R.C."/>
            <person name="Tiraby G."/>
            <person name="Waley S.G."/>
        </authorList>
    </citation>
    <scope>AMINO ACID NUMBERING SCHEME</scope>
</reference>
<gene>
    <name type="primary">cfxA</name>
</gene>
<organism>
    <name type="scientific">Phocaeicola vulgatus</name>
    <name type="common">Bacteroides vulgatus</name>
    <dbReference type="NCBI Taxonomy" id="821"/>
    <lineage>
        <taxon>Bacteria</taxon>
        <taxon>Pseudomonadati</taxon>
        <taxon>Bacteroidota</taxon>
        <taxon>Bacteroidia</taxon>
        <taxon>Bacteroidales</taxon>
        <taxon>Bacteroidaceae</taxon>
        <taxon>Phocaeicola</taxon>
    </lineage>
</organism>
<feature type="signal peptide" evidence="2">
    <location>
        <begin position="1"/>
        <end position="30"/>
    </location>
</feature>
<feature type="chain" id="PRO_0000017038" description="Beta-lactamase">
    <location>
        <begin position="31"/>
        <end position="321"/>
    </location>
</feature>
<feature type="active site" description="Acyl-ester intermediate" evidence="3">
    <location>
        <position position="83"/>
    </location>
</feature>
<feature type="binding site" evidence="1">
    <location>
        <begin position="233"/>
        <end position="235"/>
    </location>
    <ligand>
        <name>substrate</name>
    </ligand>
</feature>
<protein>
    <recommendedName>
        <fullName>Beta-lactamase</fullName>
        <ecNumber>3.5.2.6</ecNumber>
    </recommendedName>
</protein>
<dbReference type="EC" id="3.5.2.6"/>
<dbReference type="EMBL" id="U38243">
    <property type="protein sequence ID" value="AAB17891.1"/>
    <property type="molecule type" value="Genomic_DNA"/>
</dbReference>
<dbReference type="PIR" id="I40600">
    <property type="entry name" value="S27528"/>
</dbReference>
<dbReference type="RefSeq" id="WP_063843237.1">
    <property type="nucleotide sequence ID" value="NG_047633.1"/>
</dbReference>
<dbReference type="SMR" id="P30899"/>
<dbReference type="CARD" id="ARO:3003001">
    <property type="molecule name" value="CfxA"/>
    <property type="mechanism identifier" value="ARO:0001004"/>
    <property type="mechanism name" value="antibiotic inactivation"/>
</dbReference>
<dbReference type="GO" id="GO:0008800">
    <property type="term" value="F:beta-lactamase activity"/>
    <property type="evidence" value="ECO:0007669"/>
    <property type="project" value="UniProtKB-EC"/>
</dbReference>
<dbReference type="GO" id="GO:0030655">
    <property type="term" value="P:beta-lactam antibiotic catabolic process"/>
    <property type="evidence" value="ECO:0007669"/>
    <property type="project" value="InterPro"/>
</dbReference>
<dbReference type="GO" id="GO:0046677">
    <property type="term" value="P:response to antibiotic"/>
    <property type="evidence" value="ECO:0007669"/>
    <property type="project" value="UniProtKB-KW"/>
</dbReference>
<dbReference type="Gene3D" id="3.40.710.10">
    <property type="entry name" value="DD-peptidase/beta-lactamase superfamily"/>
    <property type="match status" value="1"/>
</dbReference>
<dbReference type="InterPro" id="IPR012338">
    <property type="entry name" value="Beta-lactam/transpept-like"/>
</dbReference>
<dbReference type="InterPro" id="IPR045155">
    <property type="entry name" value="Beta-lactam_cat"/>
</dbReference>
<dbReference type="InterPro" id="IPR000871">
    <property type="entry name" value="Beta-lactam_class-A"/>
</dbReference>
<dbReference type="InterPro" id="IPR023650">
    <property type="entry name" value="Beta-lactam_class-A_AS"/>
</dbReference>
<dbReference type="NCBIfam" id="NF033100">
    <property type="entry name" value="bla_CfxA"/>
    <property type="match status" value="1"/>
</dbReference>
<dbReference type="NCBIfam" id="NF033103">
    <property type="entry name" value="bla_class_A"/>
    <property type="match status" value="1"/>
</dbReference>
<dbReference type="NCBIfam" id="NF012099">
    <property type="entry name" value="SubclassA2"/>
    <property type="match status" value="1"/>
</dbReference>
<dbReference type="PANTHER" id="PTHR35333">
    <property type="entry name" value="BETA-LACTAMASE"/>
    <property type="match status" value="1"/>
</dbReference>
<dbReference type="PANTHER" id="PTHR35333:SF3">
    <property type="entry name" value="BETA-LACTAMASE-TYPE TRANSPEPTIDASE FOLD CONTAINING PROTEIN"/>
    <property type="match status" value="1"/>
</dbReference>
<dbReference type="Pfam" id="PF13354">
    <property type="entry name" value="Beta-lactamase2"/>
    <property type="match status" value="1"/>
</dbReference>
<dbReference type="SUPFAM" id="SSF56601">
    <property type="entry name" value="beta-lactamase/transpeptidase-like"/>
    <property type="match status" value="1"/>
</dbReference>
<dbReference type="PROSITE" id="PS00146">
    <property type="entry name" value="BETA_LACTAMASE_A"/>
    <property type="match status" value="1"/>
</dbReference>
<evidence type="ECO:0000250" key="1"/>
<evidence type="ECO:0000255" key="2"/>
<evidence type="ECO:0000255" key="3">
    <source>
        <dbReference type="PROSITE-ProRule" id="PRU10101"/>
    </source>
</evidence>
<evidence type="ECO:0000305" key="4"/>
<evidence type="ECO:0000305" key="5">
    <source>
    </source>
</evidence>
<proteinExistence type="inferred from homology"/>
<comment type="function">
    <text>Can hydrolyze cephalosporins, penicillins and also cefoxitin; but at a slow rate.</text>
</comment>
<comment type="catalytic activity">
    <reaction evidence="3">
        <text>a beta-lactam + H2O = a substituted beta-amino acid</text>
        <dbReference type="Rhea" id="RHEA:20401"/>
        <dbReference type="ChEBI" id="CHEBI:15377"/>
        <dbReference type="ChEBI" id="CHEBI:35627"/>
        <dbReference type="ChEBI" id="CHEBI:140347"/>
        <dbReference type="EC" id="3.5.2.6"/>
    </reaction>
</comment>
<comment type="activity regulation">
    <text>Inhibited by clavulanic acid.</text>
</comment>
<comment type="miscellaneous">
    <text evidence="5">The class A beta-lactamase family has a specific amino-acid numbering system, sometimes called Ambler or ABL numbering and often misspelt as Amber. A multiple sequence alignment was used to derive a consensus sequence and then the consensus was numbered taking into account insertions and deletions. This allows use of identical numbers, e.g. for active site residues, despite differences in protein length. UniProt always uses natural numbering of residues, hence there appear to be differences in numbering between this entry and some papers.</text>
</comment>
<comment type="similarity">
    <text evidence="4">Belongs to the class-A beta-lactamase family.</text>
</comment>
<sequence>MEKNRKKQIVVLSIALVCIFILVFSLFHKSATKDSANPPLTNVLTDSISQIVSACPGEIGVAVIVNNRDTVKVNNKSVYPMMSVFKVHQALALCNDFDNKGISLDTLVNINRDKLDPKTWSPMLKDYSGPVISLTVRDLLRYTLTQSDNNASNLMFKDMVNVAQTDSFIATLIPRSSFQIAYTEEEMSADHNKAYSNYTSPLGAAMLMNRLFTEGLIDDEKQSFIKNTLKECKTGVDRIAAPLLDKEGVVIAHKTGSGYVNENGVLAAHNDVAYICLPNNISYTLAVFVKDFKGNKSQASQYVAHISAVVYSLLMQTSVKS</sequence>